<organism>
    <name type="scientific">Mus musculus</name>
    <name type="common">Mouse</name>
    <dbReference type="NCBI Taxonomy" id="10090"/>
    <lineage>
        <taxon>Eukaryota</taxon>
        <taxon>Metazoa</taxon>
        <taxon>Chordata</taxon>
        <taxon>Craniata</taxon>
        <taxon>Vertebrata</taxon>
        <taxon>Euteleostomi</taxon>
        <taxon>Mammalia</taxon>
        <taxon>Eutheria</taxon>
        <taxon>Euarchontoglires</taxon>
        <taxon>Glires</taxon>
        <taxon>Rodentia</taxon>
        <taxon>Myomorpha</taxon>
        <taxon>Muroidea</taxon>
        <taxon>Muridae</taxon>
        <taxon>Murinae</taxon>
        <taxon>Mus</taxon>
        <taxon>Mus</taxon>
    </lineage>
</organism>
<protein>
    <recommendedName>
        <fullName evidence="4">ATP synthase F(0) complex subunit e, mitochondrial</fullName>
        <shortName>ATPase subunit e</shortName>
    </recommendedName>
    <alternativeName>
        <fullName evidence="4">ATP synthase membrane subunit e</fullName>
    </alternativeName>
</protein>
<sequence length="71" mass="8236">MVPPVQVSPLIKFGRYSALIIGMAYGAKRYSYLKPRAEEERRIAAEEKKRLDELKRIERELAEAQDDSILK</sequence>
<proteinExistence type="evidence at protein level"/>
<keyword id="KW-0007">Acetylation</keyword>
<keyword id="KW-0066">ATP synthesis</keyword>
<keyword id="KW-0138">CF(0)</keyword>
<keyword id="KW-0903">Direct protein sequencing</keyword>
<keyword id="KW-0375">Hydrogen ion transport</keyword>
<keyword id="KW-0406">Ion transport</keyword>
<keyword id="KW-0472">Membrane</keyword>
<keyword id="KW-0496">Mitochondrion</keyword>
<keyword id="KW-0999">Mitochondrion inner membrane</keyword>
<keyword id="KW-0597">Phosphoprotein</keyword>
<keyword id="KW-1185">Reference proteome</keyword>
<keyword id="KW-0813">Transport</keyword>
<accession>Q06185</accession>
<accession>P70342</accession>
<dbReference type="EMBL" id="S52977">
    <property type="protein sequence ID" value="AAB24947.1"/>
    <property type="molecule type" value="mRNA"/>
</dbReference>
<dbReference type="EMBL" id="U59283">
    <property type="protein sequence ID" value="AAC52713.1"/>
    <property type="molecule type" value="Genomic_DNA"/>
</dbReference>
<dbReference type="EMBL" id="BC028438">
    <property type="protein sequence ID" value="AAH28438.1"/>
    <property type="molecule type" value="mRNA"/>
</dbReference>
<dbReference type="CCDS" id="CCDS39204.1"/>
<dbReference type="PIR" id="JC1412">
    <property type="entry name" value="JC1412"/>
</dbReference>
<dbReference type="RefSeq" id="NP_031533.2">
    <property type="nucleotide sequence ID" value="NM_007507.3"/>
</dbReference>
<dbReference type="SMR" id="Q06185"/>
<dbReference type="BioGRID" id="198259">
    <property type="interactions" value="84"/>
</dbReference>
<dbReference type="FunCoup" id="Q06185">
    <property type="interactions" value="1341"/>
</dbReference>
<dbReference type="IntAct" id="Q06185">
    <property type="interactions" value="4"/>
</dbReference>
<dbReference type="STRING" id="10090.ENSMUSP00000051222"/>
<dbReference type="GlyGen" id="Q06185">
    <property type="glycosylation" value="1 site, 1 O-linked glycan (1 site)"/>
</dbReference>
<dbReference type="iPTMnet" id="Q06185"/>
<dbReference type="MetOSite" id="Q06185"/>
<dbReference type="PhosphoSitePlus" id="Q06185"/>
<dbReference type="SwissPalm" id="Q06185"/>
<dbReference type="jPOST" id="Q06185"/>
<dbReference type="PaxDb" id="10090-ENSMUSP00000051222"/>
<dbReference type="PeptideAtlas" id="Q06185"/>
<dbReference type="ProteomicsDB" id="277089"/>
<dbReference type="Pumba" id="Q06185"/>
<dbReference type="TopDownProteomics" id="Q06185"/>
<dbReference type="Antibodypedia" id="22135">
    <property type="antibodies" value="184 antibodies from 28 providers"/>
</dbReference>
<dbReference type="DNASU" id="11958"/>
<dbReference type="Ensembl" id="ENSMUST00000049628.16">
    <property type="protein sequence ID" value="ENSMUSP00000051222.10"/>
    <property type="gene ID" value="ENSMUSG00000050856.17"/>
</dbReference>
<dbReference type="GeneID" id="11958"/>
<dbReference type="KEGG" id="mmu:11958"/>
<dbReference type="UCSC" id="uc008yoa.1">
    <property type="organism name" value="mouse"/>
</dbReference>
<dbReference type="AGR" id="MGI:106636"/>
<dbReference type="CTD" id="521"/>
<dbReference type="MGI" id="MGI:106636">
    <property type="gene designation" value="Atp5me"/>
</dbReference>
<dbReference type="VEuPathDB" id="HostDB:ENSMUSG00000050856"/>
<dbReference type="eggNOG" id="KOG4326">
    <property type="taxonomic scope" value="Eukaryota"/>
</dbReference>
<dbReference type="GeneTree" id="ENSGT00390000005102"/>
<dbReference type="HOGENOM" id="CLU_180903_0_0_1"/>
<dbReference type="InParanoid" id="Q06185"/>
<dbReference type="OMA" id="CWRIFET"/>
<dbReference type="OrthoDB" id="9982108at2759"/>
<dbReference type="PhylomeDB" id="Q06185"/>
<dbReference type="TreeFam" id="TF314719"/>
<dbReference type="Reactome" id="R-MMU-163210">
    <property type="pathway name" value="Formation of ATP by chemiosmotic coupling"/>
</dbReference>
<dbReference type="Reactome" id="R-MMU-8949613">
    <property type="pathway name" value="Cristae formation"/>
</dbReference>
<dbReference type="BioGRID-ORCS" id="11958">
    <property type="hits" value="26 hits in 76 CRISPR screens"/>
</dbReference>
<dbReference type="CD-CODE" id="CE726F99">
    <property type="entry name" value="Postsynaptic density"/>
</dbReference>
<dbReference type="ChiTaRS" id="Atp5k">
    <property type="organism name" value="mouse"/>
</dbReference>
<dbReference type="PRO" id="PR:Q06185"/>
<dbReference type="Proteomes" id="UP000000589">
    <property type="component" value="Chromosome 5"/>
</dbReference>
<dbReference type="RNAct" id="Q06185">
    <property type="molecule type" value="protein"/>
</dbReference>
<dbReference type="Bgee" id="ENSMUSG00000050856">
    <property type="expression patterns" value="Expressed in facial nucleus and 249 other cell types or tissues"/>
</dbReference>
<dbReference type="ExpressionAtlas" id="Q06185">
    <property type="expression patterns" value="baseline and differential"/>
</dbReference>
<dbReference type="GO" id="GO:0005743">
    <property type="term" value="C:mitochondrial inner membrane"/>
    <property type="evidence" value="ECO:0007669"/>
    <property type="project" value="UniProtKB-SubCell"/>
</dbReference>
<dbReference type="GO" id="GO:0005739">
    <property type="term" value="C:mitochondrion"/>
    <property type="evidence" value="ECO:0007005"/>
    <property type="project" value="MGI"/>
</dbReference>
<dbReference type="GO" id="GO:0045259">
    <property type="term" value="C:proton-transporting ATP synthase complex"/>
    <property type="evidence" value="ECO:0000250"/>
    <property type="project" value="UniProtKB"/>
</dbReference>
<dbReference type="GO" id="GO:0044877">
    <property type="term" value="F:protein-containing complex binding"/>
    <property type="evidence" value="ECO:0007669"/>
    <property type="project" value="Ensembl"/>
</dbReference>
<dbReference type="GO" id="GO:0046933">
    <property type="term" value="F:proton-transporting ATP synthase activity, rotational mechanism"/>
    <property type="evidence" value="ECO:0007669"/>
    <property type="project" value="Ensembl"/>
</dbReference>
<dbReference type="GO" id="GO:0042776">
    <property type="term" value="P:proton motive force-driven mitochondrial ATP synthesis"/>
    <property type="evidence" value="ECO:0007669"/>
    <property type="project" value="Ensembl"/>
</dbReference>
<dbReference type="InterPro" id="IPR008386">
    <property type="entry name" value="ATP_synth_F0_esu_mt"/>
</dbReference>
<dbReference type="PANTHER" id="PTHR12427">
    <property type="entry name" value="ATP SYNTHASE E CHAIN, MITOCHONDRIAL"/>
    <property type="match status" value="1"/>
</dbReference>
<dbReference type="PANTHER" id="PTHR12427:SF1">
    <property type="entry name" value="ATP SYNTHASE SUBUNIT E, MITOCHONDRIAL"/>
    <property type="match status" value="1"/>
</dbReference>
<dbReference type="Pfam" id="PF05680">
    <property type="entry name" value="ATP-synt_E"/>
    <property type="match status" value="1"/>
</dbReference>
<feature type="initiator methionine" description="Removed" evidence="3">
    <location>
        <position position="1"/>
    </location>
</feature>
<feature type="chain" id="PRO_0000071685" description="ATP synthase F(0) complex subunit e, mitochondrial">
    <location>
        <begin position="2"/>
        <end position="71"/>
    </location>
</feature>
<feature type="modified residue" description="N6-acetyllysine" evidence="5">
    <location>
        <position position="34"/>
    </location>
</feature>
<feature type="modified residue" description="Phosphoserine" evidence="2">
    <location>
        <position position="68"/>
    </location>
</feature>
<feature type="sequence conflict" description="In Ref. 2; AAC52713." evidence="4" ref="2">
    <original>F</original>
    <variation>S</variation>
    <location>
        <position position="13"/>
    </location>
</feature>
<feature type="sequence conflict" description="In Ref. 2; AAC52713." evidence="4" ref="2">
    <original>K</original>
    <variation>R</variation>
    <location>
        <position position="48"/>
    </location>
</feature>
<reference key="1">
    <citation type="journal article" date="1993" name="Biochem. Biophys. Res. Commun.">
        <title>F1F0-ATPase subunit e gene isolated in a screen for diet regulated genes.</title>
        <authorList>
            <person name="Elliott T.S."/>
            <person name="Swartz D.A."/>
            <person name="Paisley E.A."/>
            <person name="Mangian H.J."/>
            <person name="Visek W.J."/>
            <person name="Kaput J."/>
        </authorList>
    </citation>
    <scope>NUCLEOTIDE SEQUENCE [MRNA]</scope>
    <source>
        <strain>BALB/cJ</strain>
        <tissue>Mammary gland</tissue>
    </source>
</reference>
<reference key="2">
    <citation type="journal article" date="1996" name="J. Biol. Chem.">
        <title>The e subunit gene of murine F1F0-ATP synthase. Genomic sequence, chromosomal mapping, and diet regulation.</title>
        <authorList>
            <person name="Swartz D.A."/>
            <person name="Park E.I."/>
            <person name="Visek W.J."/>
            <person name="Kaput J."/>
        </authorList>
    </citation>
    <scope>NUCLEOTIDE SEQUENCE [GENOMIC DNA]</scope>
    <source>
        <strain>BALB/cJ</strain>
    </source>
</reference>
<reference key="3">
    <citation type="journal article" date="2004" name="Genome Res.">
        <title>The status, quality, and expansion of the NIH full-length cDNA project: the Mammalian Gene Collection (MGC).</title>
        <authorList>
            <consortium name="The MGC Project Team"/>
        </authorList>
    </citation>
    <scope>NUCLEOTIDE SEQUENCE [LARGE SCALE MRNA]</scope>
    <source>
        <strain>C57BL/6J</strain>
        <tissue>Mammary gland</tissue>
    </source>
</reference>
<reference key="4">
    <citation type="submission" date="2007-04" db="UniProtKB">
        <authorList>
            <person name="Lubec G."/>
            <person name="Kang S.U."/>
        </authorList>
    </citation>
    <scope>PROTEIN SEQUENCE OF 2-12; 16-28 AND 60-71</scope>
    <scope>IDENTIFICATION BY MASS SPECTROMETRY</scope>
    <source>
        <strain>C57BL/6J</strain>
        <tissue>Brain</tissue>
    </source>
</reference>
<reference key="5">
    <citation type="journal article" date="2010" name="Cell">
        <title>A tissue-specific atlas of mouse protein phosphorylation and expression.</title>
        <authorList>
            <person name="Huttlin E.L."/>
            <person name="Jedrychowski M.P."/>
            <person name="Elias J.E."/>
            <person name="Goswami T."/>
            <person name="Rad R."/>
            <person name="Beausoleil S.A."/>
            <person name="Villen J."/>
            <person name="Haas W."/>
            <person name="Sowa M.E."/>
            <person name="Gygi S.P."/>
        </authorList>
    </citation>
    <scope>IDENTIFICATION BY MASS SPECTROMETRY [LARGE SCALE ANALYSIS]</scope>
    <source>
        <tissue>Brain</tissue>
        <tissue>Brown adipose tissue</tissue>
        <tissue>Heart</tissue>
        <tissue>Kidney</tissue>
        <tissue>Liver</tissue>
        <tissue>Lung</tissue>
        <tissue>Pancreas</tissue>
        <tissue>Spleen</tissue>
        <tissue>Testis</tissue>
    </source>
</reference>
<reference key="6">
    <citation type="journal article" date="2013" name="Proc. Natl. Acad. Sci. U.S.A.">
        <title>Label-free quantitative proteomics of the lysine acetylome in mitochondria identifies substrates of SIRT3 in metabolic pathways.</title>
        <authorList>
            <person name="Rardin M.J."/>
            <person name="Newman J.C."/>
            <person name="Held J.M."/>
            <person name="Cusack M.P."/>
            <person name="Sorensen D.J."/>
            <person name="Li B."/>
            <person name="Schilling B."/>
            <person name="Mooney S.D."/>
            <person name="Kahn C.R."/>
            <person name="Verdin E."/>
            <person name="Gibson B.W."/>
        </authorList>
    </citation>
    <scope>ACETYLATION [LARGE SCALE ANALYSIS] AT LYS-34</scope>
    <scope>IDENTIFICATION BY MASS SPECTROMETRY [LARGE SCALE ANALYSIS]</scope>
    <source>
        <tissue>Liver</tissue>
    </source>
</reference>
<evidence type="ECO:0000250" key="1">
    <source>
        <dbReference type="UniProtKB" id="P19483"/>
    </source>
</evidence>
<evidence type="ECO:0000250" key="2">
    <source>
        <dbReference type="UniProtKB" id="P29419"/>
    </source>
</evidence>
<evidence type="ECO:0000250" key="3">
    <source>
        <dbReference type="UniProtKB" id="P56385"/>
    </source>
</evidence>
<evidence type="ECO:0000305" key="4"/>
<evidence type="ECO:0007744" key="5">
    <source>
    </source>
</evidence>
<comment type="function">
    <text evidence="1 3">Subunit e, of the mitochondrial membrane ATP synthase complex (F(1)F(0) ATP synthase or Complex V) that produces ATP from ADP in the presence of a proton gradient across the membrane which is generated by electron transport complexes of the respiratory chain. ATP synthase complex consist of a soluble F(1) head domain - the catalytic core - and a membrane F(1) domain - the membrane proton channel. These two domains are linked by a central stalk rotating inside the F(1) region and a stationary peripheral stalk. During catalysis, ATP synthesis in the catalytic domain of F(1) is coupled via a rotary mechanism of the central stalk subunits to proton translocation (By similarity). In vivo, can only synthesize ATP although its ATP hydrolase activity can be activated artificially in vitro (By similarity). Part of the complex F(0) domain (By similarity).</text>
</comment>
<comment type="subunit">
    <text evidence="3">Component of the ATP synthase complex composed at least of ATP5F1A/subunit alpha, ATP5F1B/subunit beta, ATP5MC1/subunit c (homooctomer), MT-ATP6/subunit a, MT-ATP8/subunit 8, ATP5ME/subunit e, ATP5MF/subunit f, ATP5MG/subunit g, ATP5MK/subunit k, ATP5MJ/subunit j, ATP5F1C/subunit gamma, ATP5F1D/subunit delta, ATP5F1E/subunit epsilon, ATP5PF/subunit F6, ATP5PB/subunit b, ATP5PD/subunit d, ATP5PO/subunit OSCP. ATP synthase complex consists of a soluble F(1) head domain (subunits alpha(3) and beta(3)) - the catalytic core - and a membrane F(0) domain - the membrane proton channel (subunits c, a, 8, e, f, g, k and j). These two domains are linked by a central stalk (subunits gamma, delta, and epsilon) rotating inside the F1 region and a stationary peripheral stalk (subunits F6, b, d, and OSCP).</text>
</comment>
<comment type="subcellular location">
    <subcellularLocation>
        <location>Mitochondrion</location>
    </subcellularLocation>
    <subcellularLocation>
        <location>Mitochondrion inner membrane</location>
    </subcellularLocation>
</comment>
<comment type="tissue specificity">
    <text>Mammary gland, liver, kidney, heart, spleen, brain and lung.</text>
</comment>
<comment type="similarity">
    <text evidence="4">Belongs to the ATPase e subunit family.</text>
</comment>
<gene>
    <name evidence="3" type="primary">Atp5me</name>
    <name type="synonym">Atp5i</name>
    <name type="synonym">Atp5k</name>
    <name type="synonym">Lfm-1</name>
    <name type="synonym">Lfm1</name>
</gene>
<name>ATP5I_MOUSE</name>